<dbReference type="EC" id="3.6.1.9" evidence="1"/>
<dbReference type="EMBL" id="CP000246">
    <property type="protein sequence ID" value="ABG84332.1"/>
    <property type="molecule type" value="Genomic_DNA"/>
</dbReference>
<dbReference type="RefSeq" id="WP_003455083.1">
    <property type="nucleotide sequence ID" value="NC_008261.1"/>
</dbReference>
<dbReference type="SMR" id="Q0TNG7"/>
<dbReference type="STRING" id="195103.CPF_2400"/>
<dbReference type="PaxDb" id="195103-CPF_2400"/>
<dbReference type="KEGG" id="cpf:CPF_2400"/>
<dbReference type="eggNOG" id="COG0424">
    <property type="taxonomic scope" value="Bacteria"/>
</dbReference>
<dbReference type="HOGENOM" id="CLU_040416_0_2_9"/>
<dbReference type="Proteomes" id="UP000001823">
    <property type="component" value="Chromosome"/>
</dbReference>
<dbReference type="GO" id="GO:0005737">
    <property type="term" value="C:cytoplasm"/>
    <property type="evidence" value="ECO:0007669"/>
    <property type="project" value="UniProtKB-SubCell"/>
</dbReference>
<dbReference type="GO" id="GO:0036218">
    <property type="term" value="F:dTTP diphosphatase activity"/>
    <property type="evidence" value="ECO:0007669"/>
    <property type="project" value="RHEA"/>
</dbReference>
<dbReference type="GO" id="GO:0036221">
    <property type="term" value="F:UTP diphosphatase activity"/>
    <property type="evidence" value="ECO:0007669"/>
    <property type="project" value="RHEA"/>
</dbReference>
<dbReference type="GO" id="GO:0009117">
    <property type="term" value="P:nucleotide metabolic process"/>
    <property type="evidence" value="ECO:0007669"/>
    <property type="project" value="UniProtKB-KW"/>
</dbReference>
<dbReference type="CDD" id="cd00555">
    <property type="entry name" value="Maf"/>
    <property type="match status" value="1"/>
</dbReference>
<dbReference type="Gene3D" id="3.90.950.10">
    <property type="match status" value="1"/>
</dbReference>
<dbReference type="HAMAP" id="MF_00528">
    <property type="entry name" value="Maf"/>
    <property type="match status" value="1"/>
</dbReference>
<dbReference type="InterPro" id="IPR029001">
    <property type="entry name" value="ITPase-like_fam"/>
</dbReference>
<dbReference type="InterPro" id="IPR003697">
    <property type="entry name" value="Maf-like"/>
</dbReference>
<dbReference type="NCBIfam" id="TIGR00172">
    <property type="entry name" value="maf"/>
    <property type="match status" value="1"/>
</dbReference>
<dbReference type="NCBIfam" id="NF000867">
    <property type="entry name" value="PRK00078.1"/>
    <property type="match status" value="1"/>
</dbReference>
<dbReference type="PANTHER" id="PTHR43213">
    <property type="entry name" value="BIFUNCTIONAL DTTP/UTP PYROPHOSPHATASE/METHYLTRANSFERASE PROTEIN-RELATED"/>
    <property type="match status" value="1"/>
</dbReference>
<dbReference type="PANTHER" id="PTHR43213:SF5">
    <property type="entry name" value="BIFUNCTIONAL DTTP_UTP PYROPHOSPHATASE_METHYLTRANSFERASE PROTEIN-RELATED"/>
    <property type="match status" value="1"/>
</dbReference>
<dbReference type="Pfam" id="PF02545">
    <property type="entry name" value="Maf"/>
    <property type="match status" value="1"/>
</dbReference>
<dbReference type="PIRSF" id="PIRSF006305">
    <property type="entry name" value="Maf"/>
    <property type="match status" value="1"/>
</dbReference>
<dbReference type="SUPFAM" id="SSF52972">
    <property type="entry name" value="ITPase-like"/>
    <property type="match status" value="1"/>
</dbReference>
<gene>
    <name type="ordered locus">CPF_2400</name>
</gene>
<accession>Q0TNG7</accession>
<organism>
    <name type="scientific">Clostridium perfringens (strain ATCC 13124 / DSM 756 / JCM 1290 / NCIMB 6125 / NCTC 8237 / Type A)</name>
    <dbReference type="NCBI Taxonomy" id="195103"/>
    <lineage>
        <taxon>Bacteria</taxon>
        <taxon>Bacillati</taxon>
        <taxon>Bacillota</taxon>
        <taxon>Clostridia</taxon>
        <taxon>Eubacteriales</taxon>
        <taxon>Clostridiaceae</taxon>
        <taxon>Clostridium</taxon>
    </lineage>
</organism>
<comment type="function">
    <text evidence="1">Nucleoside triphosphate pyrophosphatase that hydrolyzes dTTP and UTP. May have a dual role in cell division arrest and in preventing the incorporation of modified nucleotides into cellular nucleic acids.</text>
</comment>
<comment type="catalytic activity">
    <reaction evidence="1">
        <text>dTTP + H2O = dTMP + diphosphate + H(+)</text>
        <dbReference type="Rhea" id="RHEA:28534"/>
        <dbReference type="ChEBI" id="CHEBI:15377"/>
        <dbReference type="ChEBI" id="CHEBI:15378"/>
        <dbReference type="ChEBI" id="CHEBI:33019"/>
        <dbReference type="ChEBI" id="CHEBI:37568"/>
        <dbReference type="ChEBI" id="CHEBI:63528"/>
        <dbReference type="EC" id="3.6.1.9"/>
    </reaction>
</comment>
<comment type="catalytic activity">
    <reaction evidence="1">
        <text>UTP + H2O = UMP + diphosphate + H(+)</text>
        <dbReference type="Rhea" id="RHEA:29395"/>
        <dbReference type="ChEBI" id="CHEBI:15377"/>
        <dbReference type="ChEBI" id="CHEBI:15378"/>
        <dbReference type="ChEBI" id="CHEBI:33019"/>
        <dbReference type="ChEBI" id="CHEBI:46398"/>
        <dbReference type="ChEBI" id="CHEBI:57865"/>
        <dbReference type="EC" id="3.6.1.9"/>
    </reaction>
</comment>
<comment type="cofactor">
    <cofactor evidence="1">
        <name>a divalent metal cation</name>
        <dbReference type="ChEBI" id="CHEBI:60240"/>
    </cofactor>
</comment>
<comment type="subcellular location">
    <subcellularLocation>
        <location evidence="1">Cytoplasm</location>
    </subcellularLocation>
</comment>
<comment type="similarity">
    <text evidence="1">Belongs to the Maf family. YhdE subfamily.</text>
</comment>
<proteinExistence type="inferred from homology"/>
<sequence length="192" mass="21519">MKVILASKSPRRVEILEKIVKEFEVVQSNFDENTIDFKGDIEKYVKDLSRNKAIEVSKRLNEPSIVIAADTVVFQNGKVLEKPKNEEDAFSMLSSLSGNTHKVYSGICLINTYDDTVVTDCDCTEVRFSELNPRQIRNYINSGEPMDKAGAYGIQGLGGAFVEGIKGCYYNVMGLPLNKLYKALENYDITIL</sequence>
<protein>
    <recommendedName>
        <fullName evidence="1">dTTP/UTP pyrophosphatase</fullName>
        <shortName evidence="1">dTTPase/UTPase</shortName>
        <ecNumber evidence="1">3.6.1.9</ecNumber>
    </recommendedName>
    <alternativeName>
        <fullName evidence="1">Nucleoside triphosphate pyrophosphatase</fullName>
    </alternativeName>
    <alternativeName>
        <fullName evidence="1">Nucleotide pyrophosphatase</fullName>
        <shortName evidence="1">Nucleotide PPase</shortName>
    </alternativeName>
</protein>
<name>NTPPA_CLOP1</name>
<evidence type="ECO:0000255" key="1">
    <source>
        <dbReference type="HAMAP-Rule" id="MF_00528"/>
    </source>
</evidence>
<feature type="chain" id="PRO_0000267286" description="dTTP/UTP pyrophosphatase">
    <location>
        <begin position="1"/>
        <end position="192"/>
    </location>
</feature>
<feature type="active site" description="Proton acceptor" evidence="1">
    <location>
        <position position="70"/>
    </location>
</feature>
<feature type="site" description="Important for substrate specificity" evidence="1">
    <location>
        <position position="11"/>
    </location>
</feature>
<feature type="site" description="Important for substrate specificity" evidence="1">
    <location>
        <position position="71"/>
    </location>
</feature>
<feature type="site" description="Important for substrate specificity" evidence="1">
    <location>
        <position position="155"/>
    </location>
</feature>
<keyword id="KW-0963">Cytoplasm</keyword>
<keyword id="KW-0378">Hydrolase</keyword>
<keyword id="KW-0546">Nucleotide metabolism</keyword>
<reference key="1">
    <citation type="journal article" date="2006" name="Genome Res.">
        <title>Skewed genomic variability in strains of the toxigenic bacterial pathogen, Clostridium perfringens.</title>
        <authorList>
            <person name="Myers G.S.A."/>
            <person name="Rasko D.A."/>
            <person name="Cheung J.K."/>
            <person name="Ravel J."/>
            <person name="Seshadri R."/>
            <person name="DeBoy R.T."/>
            <person name="Ren Q."/>
            <person name="Varga J."/>
            <person name="Awad M.M."/>
            <person name="Brinkac L.M."/>
            <person name="Daugherty S.C."/>
            <person name="Haft D.H."/>
            <person name="Dodson R.J."/>
            <person name="Madupu R."/>
            <person name="Nelson W.C."/>
            <person name="Rosovitz M.J."/>
            <person name="Sullivan S.A."/>
            <person name="Khouri H."/>
            <person name="Dimitrov G.I."/>
            <person name="Watkins K.L."/>
            <person name="Mulligan S."/>
            <person name="Benton J."/>
            <person name="Radune D."/>
            <person name="Fisher D.J."/>
            <person name="Atkins H.S."/>
            <person name="Hiscox T."/>
            <person name="Jost B.H."/>
            <person name="Billington S.J."/>
            <person name="Songer J.G."/>
            <person name="McClane B.A."/>
            <person name="Titball R.W."/>
            <person name="Rood J.I."/>
            <person name="Melville S.B."/>
            <person name="Paulsen I.T."/>
        </authorList>
    </citation>
    <scope>NUCLEOTIDE SEQUENCE [LARGE SCALE GENOMIC DNA]</scope>
    <source>
        <strain>ATCC 13124 / DSM 756 / JCM 1290 / NCIMB 6125 / NCTC 8237 / S 107 / Type A</strain>
    </source>
</reference>